<organism>
    <name type="scientific">Schizosaccharomyces pombe (strain 972 / ATCC 24843)</name>
    <name type="common">Fission yeast</name>
    <dbReference type="NCBI Taxonomy" id="284812"/>
    <lineage>
        <taxon>Eukaryota</taxon>
        <taxon>Fungi</taxon>
        <taxon>Dikarya</taxon>
        <taxon>Ascomycota</taxon>
        <taxon>Taphrinomycotina</taxon>
        <taxon>Schizosaccharomycetes</taxon>
        <taxon>Schizosaccharomycetales</taxon>
        <taxon>Schizosaccharomycetaceae</taxon>
        <taxon>Schizosaccharomyces</taxon>
    </lineage>
</organism>
<reference key="1">
    <citation type="journal article" date="2004" name="Can. J. Microbiol.">
        <title>Characterization and regulation of the gamma-glutamyl transpeptidase gene from the fission yeast Schizosaccharomyces pombe.</title>
        <authorList>
            <person name="Park H.-J."/>
            <person name="Lim H.-W."/>
            <person name="Kim K."/>
            <person name="Kim I.-H."/>
            <person name="Park E.-H."/>
            <person name="Lim C.-J."/>
        </authorList>
    </citation>
    <scope>NUCLEOTIDE SEQUENCE [GENOMIC DNA]</scope>
    <scope>FUNCTION</scope>
</reference>
<reference key="2">
    <citation type="journal article" date="2002" name="Nature">
        <title>The genome sequence of Schizosaccharomyces pombe.</title>
        <authorList>
            <person name="Wood V."/>
            <person name="Gwilliam R."/>
            <person name="Rajandream M.A."/>
            <person name="Lyne M.H."/>
            <person name="Lyne R."/>
            <person name="Stewart A."/>
            <person name="Sgouros J.G."/>
            <person name="Peat N."/>
            <person name="Hayles J."/>
            <person name="Baker S.G."/>
            <person name="Basham D."/>
            <person name="Bowman S."/>
            <person name="Brooks K."/>
            <person name="Brown D."/>
            <person name="Brown S."/>
            <person name="Chillingworth T."/>
            <person name="Churcher C.M."/>
            <person name="Collins M."/>
            <person name="Connor R."/>
            <person name="Cronin A."/>
            <person name="Davis P."/>
            <person name="Feltwell T."/>
            <person name="Fraser A."/>
            <person name="Gentles S."/>
            <person name="Goble A."/>
            <person name="Hamlin N."/>
            <person name="Harris D.E."/>
            <person name="Hidalgo J."/>
            <person name="Hodgson G."/>
            <person name="Holroyd S."/>
            <person name="Hornsby T."/>
            <person name="Howarth S."/>
            <person name="Huckle E.J."/>
            <person name="Hunt S."/>
            <person name="Jagels K."/>
            <person name="James K.D."/>
            <person name="Jones L."/>
            <person name="Jones M."/>
            <person name="Leather S."/>
            <person name="McDonald S."/>
            <person name="McLean J."/>
            <person name="Mooney P."/>
            <person name="Moule S."/>
            <person name="Mungall K.L."/>
            <person name="Murphy L.D."/>
            <person name="Niblett D."/>
            <person name="Odell C."/>
            <person name="Oliver K."/>
            <person name="O'Neil S."/>
            <person name="Pearson D."/>
            <person name="Quail M.A."/>
            <person name="Rabbinowitsch E."/>
            <person name="Rutherford K.M."/>
            <person name="Rutter S."/>
            <person name="Saunders D."/>
            <person name="Seeger K."/>
            <person name="Sharp S."/>
            <person name="Skelton J."/>
            <person name="Simmonds M.N."/>
            <person name="Squares R."/>
            <person name="Squares S."/>
            <person name="Stevens K."/>
            <person name="Taylor K."/>
            <person name="Taylor R.G."/>
            <person name="Tivey A."/>
            <person name="Walsh S.V."/>
            <person name="Warren T."/>
            <person name="Whitehead S."/>
            <person name="Woodward J.R."/>
            <person name="Volckaert G."/>
            <person name="Aert R."/>
            <person name="Robben J."/>
            <person name="Grymonprez B."/>
            <person name="Weltjens I."/>
            <person name="Vanstreels E."/>
            <person name="Rieger M."/>
            <person name="Schaefer M."/>
            <person name="Mueller-Auer S."/>
            <person name="Gabel C."/>
            <person name="Fuchs M."/>
            <person name="Duesterhoeft A."/>
            <person name="Fritzc C."/>
            <person name="Holzer E."/>
            <person name="Moestl D."/>
            <person name="Hilbert H."/>
            <person name="Borzym K."/>
            <person name="Langer I."/>
            <person name="Beck A."/>
            <person name="Lehrach H."/>
            <person name="Reinhardt R."/>
            <person name="Pohl T.M."/>
            <person name="Eger P."/>
            <person name="Zimmermann W."/>
            <person name="Wedler H."/>
            <person name="Wambutt R."/>
            <person name="Purnelle B."/>
            <person name="Goffeau A."/>
            <person name="Cadieu E."/>
            <person name="Dreano S."/>
            <person name="Gloux S."/>
            <person name="Lelaure V."/>
            <person name="Mottier S."/>
            <person name="Galibert F."/>
            <person name="Aves S.J."/>
            <person name="Xiang Z."/>
            <person name="Hunt C."/>
            <person name="Moore K."/>
            <person name="Hurst S.M."/>
            <person name="Lucas M."/>
            <person name="Rochet M."/>
            <person name="Gaillardin C."/>
            <person name="Tallada V.A."/>
            <person name="Garzon A."/>
            <person name="Thode G."/>
            <person name="Daga R.R."/>
            <person name="Cruzado L."/>
            <person name="Jimenez J."/>
            <person name="Sanchez M."/>
            <person name="del Rey F."/>
            <person name="Benito J."/>
            <person name="Dominguez A."/>
            <person name="Revuelta J.L."/>
            <person name="Moreno S."/>
            <person name="Armstrong J."/>
            <person name="Forsburg S.L."/>
            <person name="Cerutti L."/>
            <person name="Lowe T."/>
            <person name="McCombie W.R."/>
            <person name="Paulsen I."/>
            <person name="Potashkin J."/>
            <person name="Shpakovski G.V."/>
            <person name="Ussery D."/>
            <person name="Barrell B.G."/>
            <person name="Nurse P."/>
        </authorList>
    </citation>
    <scope>NUCLEOTIDE SEQUENCE [LARGE SCALE GENOMIC DNA]</scope>
    <source>
        <strain>972 / ATCC 24843</strain>
    </source>
</reference>
<reference key="3">
    <citation type="journal article" date="2005" name="J. Microbiol.">
        <title>The Schizosaccharomyces pombe gene encoding gamma-glutamyl transpeptidase I is regulated by non-fermentable carbon sources and nitrogen starvation.</title>
        <authorList>
            <person name="Kim H.-G."/>
            <person name="Park H.-J."/>
            <person name="Kang H.-J."/>
            <person name="Lim H.-W."/>
            <person name="Kim K."/>
            <person name="Park E.-H."/>
            <person name="Ahn K."/>
            <person name="Lim C.-J."/>
        </authorList>
    </citation>
    <scope>INDUCTION</scope>
</reference>
<reference key="4">
    <citation type="journal article" date="2006" name="Nat. Biotechnol.">
        <title>ORFeome cloning and global analysis of protein localization in the fission yeast Schizosaccharomyces pombe.</title>
        <authorList>
            <person name="Matsuyama A."/>
            <person name="Arai R."/>
            <person name="Yashiroda Y."/>
            <person name="Shirai A."/>
            <person name="Kamata A."/>
            <person name="Sekido S."/>
            <person name="Kobayashi Y."/>
            <person name="Hashimoto A."/>
            <person name="Hamamoto M."/>
            <person name="Hiraoka Y."/>
            <person name="Horinouchi S."/>
            <person name="Yoshida M."/>
        </authorList>
    </citation>
    <scope>SUBCELLULAR LOCATION [LARGE SCALE ANALYSIS]</scope>
</reference>
<keyword id="KW-0012">Acyltransferase</keyword>
<keyword id="KW-0256">Endoplasmic reticulum</keyword>
<keyword id="KW-0325">Glycoprotein</keyword>
<keyword id="KW-0378">Hydrolase</keyword>
<keyword id="KW-0472">Membrane</keyword>
<keyword id="KW-0645">Protease</keyword>
<keyword id="KW-1185">Reference proteome</keyword>
<keyword id="KW-0735">Signal-anchor</keyword>
<keyword id="KW-0808">Transferase</keyword>
<keyword id="KW-0812">Transmembrane</keyword>
<keyword id="KW-1133">Transmembrane helix</keyword>
<dbReference type="EC" id="3.4.19.13"/>
<dbReference type="EC" id="2.3.2.2"/>
<dbReference type="EMBL" id="AF535133">
    <property type="protein sequence ID" value="AAN01227.1"/>
    <property type="molecule type" value="Genomic_DNA"/>
</dbReference>
<dbReference type="EMBL" id="CU329670">
    <property type="protein sequence ID" value="CAB65810.1"/>
    <property type="molecule type" value="Genomic_DNA"/>
</dbReference>
<dbReference type="PIR" id="T50239">
    <property type="entry name" value="T50239"/>
</dbReference>
<dbReference type="RefSeq" id="NP_593457.1">
    <property type="nucleotide sequence ID" value="NM_001018890.2"/>
</dbReference>
<dbReference type="SMR" id="Q9US04"/>
<dbReference type="BioGRID" id="279953">
    <property type="interactions" value="3"/>
</dbReference>
<dbReference type="FunCoup" id="Q9US04">
    <property type="interactions" value="110"/>
</dbReference>
<dbReference type="STRING" id="284812.Q9US04"/>
<dbReference type="MEROPS" id="T03.011"/>
<dbReference type="GlyCosmos" id="Q9US04">
    <property type="glycosylation" value="6 sites, No reported glycans"/>
</dbReference>
<dbReference type="iPTMnet" id="Q9US04"/>
<dbReference type="PaxDb" id="4896-SPAC664.09.1"/>
<dbReference type="EnsemblFungi" id="SPAC664.09.1">
    <property type="protein sequence ID" value="SPAC664.09.1:pep"/>
    <property type="gene ID" value="SPAC664.09"/>
</dbReference>
<dbReference type="GeneID" id="2543536"/>
<dbReference type="KEGG" id="spo:2543536"/>
<dbReference type="PomBase" id="SPAC664.09">
    <property type="gene designation" value="ggt1"/>
</dbReference>
<dbReference type="VEuPathDB" id="FungiDB:SPAC664.09"/>
<dbReference type="eggNOG" id="KOG2410">
    <property type="taxonomic scope" value="Eukaryota"/>
</dbReference>
<dbReference type="HOGENOM" id="CLU_014813_4_1_1"/>
<dbReference type="InParanoid" id="Q9US04"/>
<dbReference type="OMA" id="ICGMGPP"/>
<dbReference type="PhylomeDB" id="Q9US04"/>
<dbReference type="Reactome" id="R-SPO-174403">
    <property type="pathway name" value="Glutathione synthesis and recycling"/>
</dbReference>
<dbReference type="Reactome" id="R-SPO-2142691">
    <property type="pathway name" value="Synthesis of Leukotrienes (LT) and Eoxins (EX)"/>
</dbReference>
<dbReference type="Reactome" id="R-SPO-5423646">
    <property type="pathway name" value="Aflatoxin activation and detoxification"/>
</dbReference>
<dbReference type="Reactome" id="R-SPO-9753281">
    <property type="pathway name" value="Paracetamol ADME"/>
</dbReference>
<dbReference type="UniPathway" id="UPA00204"/>
<dbReference type="PRO" id="PR:Q9US04"/>
<dbReference type="Proteomes" id="UP000002485">
    <property type="component" value="Chromosome I"/>
</dbReference>
<dbReference type="GO" id="GO:0005783">
    <property type="term" value="C:endoplasmic reticulum"/>
    <property type="evidence" value="ECO:0007005"/>
    <property type="project" value="PomBase"/>
</dbReference>
<dbReference type="GO" id="GO:0005789">
    <property type="term" value="C:endoplasmic reticulum membrane"/>
    <property type="evidence" value="ECO:0007669"/>
    <property type="project" value="UniProtKB-SubCell"/>
</dbReference>
<dbReference type="GO" id="GO:0000324">
    <property type="term" value="C:fungal-type vacuole"/>
    <property type="evidence" value="ECO:0000318"/>
    <property type="project" value="GO_Central"/>
</dbReference>
<dbReference type="GO" id="GO:0005886">
    <property type="term" value="C:plasma membrane"/>
    <property type="evidence" value="ECO:0000318"/>
    <property type="project" value="GO_Central"/>
</dbReference>
<dbReference type="GO" id="GO:0036374">
    <property type="term" value="F:glutathione hydrolase activity"/>
    <property type="evidence" value="ECO:0000269"/>
    <property type="project" value="PomBase"/>
</dbReference>
<dbReference type="GO" id="GO:0103068">
    <property type="term" value="F:leukotriene C4 gamma-glutamyl transferase activity"/>
    <property type="evidence" value="ECO:0007669"/>
    <property type="project" value="UniProtKB-EC"/>
</dbReference>
<dbReference type="GO" id="GO:1990748">
    <property type="term" value="P:cellular detoxification"/>
    <property type="evidence" value="ECO:0000303"/>
    <property type="project" value="PomBase"/>
</dbReference>
<dbReference type="GO" id="GO:0006751">
    <property type="term" value="P:glutathione catabolic process"/>
    <property type="evidence" value="ECO:0000318"/>
    <property type="project" value="GO_Central"/>
</dbReference>
<dbReference type="GO" id="GO:0006508">
    <property type="term" value="P:proteolysis"/>
    <property type="evidence" value="ECO:0007669"/>
    <property type="project" value="UniProtKB-KW"/>
</dbReference>
<dbReference type="FunFam" id="3.60.20.40:FF:000001">
    <property type="entry name" value="Gamma-glutamyltranspeptidase 1"/>
    <property type="match status" value="1"/>
</dbReference>
<dbReference type="FunFam" id="1.10.246.130:FF:000005">
    <property type="entry name" value="Gamma-glutamyltranspeptidase 1, putative"/>
    <property type="match status" value="1"/>
</dbReference>
<dbReference type="Gene3D" id="1.10.246.130">
    <property type="match status" value="1"/>
</dbReference>
<dbReference type="Gene3D" id="3.60.20.40">
    <property type="match status" value="1"/>
</dbReference>
<dbReference type="InterPro" id="IPR043138">
    <property type="entry name" value="GGT_lsub_C"/>
</dbReference>
<dbReference type="InterPro" id="IPR000101">
    <property type="entry name" value="GGT_peptidase"/>
</dbReference>
<dbReference type="InterPro" id="IPR043137">
    <property type="entry name" value="GGT_ssub"/>
</dbReference>
<dbReference type="InterPro" id="IPR029055">
    <property type="entry name" value="Ntn_hydrolases_N"/>
</dbReference>
<dbReference type="NCBIfam" id="TIGR00066">
    <property type="entry name" value="g_glut_trans"/>
    <property type="match status" value="1"/>
</dbReference>
<dbReference type="PANTHER" id="PTHR11686">
    <property type="entry name" value="GAMMA GLUTAMYL TRANSPEPTIDASE"/>
    <property type="match status" value="1"/>
</dbReference>
<dbReference type="PANTHER" id="PTHR11686:SF70">
    <property type="entry name" value="GLUTATHIONE HYDROLASE PROENZYME 1"/>
    <property type="match status" value="1"/>
</dbReference>
<dbReference type="Pfam" id="PF01019">
    <property type="entry name" value="G_glu_transpept"/>
    <property type="match status" value="1"/>
</dbReference>
<dbReference type="PRINTS" id="PR01210">
    <property type="entry name" value="GGTRANSPTASE"/>
</dbReference>
<dbReference type="SUPFAM" id="SSF56235">
    <property type="entry name" value="N-terminal nucleophile aminohydrolases (Ntn hydrolases)"/>
    <property type="match status" value="1"/>
</dbReference>
<sequence length="630" mass="68722">MGINTSSAQSSGAASIARSSVNVKSGNRHLSSNKKSATSALEERASRPSILVTFLVLAGTILSLYIWPILSPDLFFANQRCSFKYKNKGSQRVVVEGKNGVVATEEETCSQIGVGILKAGGNAVDAAIASGICIGAVNSFSSGIGGGGFMLIRHPNGTAHSLNFRETAPAGASKNMFHGNSTLSQVGGLSVAVPGEIAGYERAWKMYGSLPWHKLFEPTIRLMRDGMPMPKELASRIRRPEFSYFKTHPDWSKIFAPEGVFLHVGEKFYRPALASTLEEIAKFGPEVFYTGKIAERLVKFVQQQGGILTMEDMANFSVVVEEPIYGNFYDREVITCGSPCSGEALILGLNVLSKVDLSEGTSILGCEMTDIGVHHLIETMKWMSAGRTVLADPTFYNNTDHVEQLLSLEYADEIRNNISNERTFDFTHYKAEYDFPNDHGTTHLSVIDKDNMAVGLTASINLMFGSQLLEPETGIILNDHMDDFASPGIVNAFGLSPSPYNFIAPGKRPQSSAVPTILVYNGEVEMVLGGSGGSRIVTAVLDTIIKKYKWGKSLLESVESPRFHHQLMPNIVYIDETVEIEVLRALEKFGHIVDLIPVQYPFSEIQAVFRTNGTLYGLSDSRKQAVAAAY</sequence>
<feature type="chain" id="PRO_0000247898" description="Glutathione hydrolase 1 heavy chain" evidence="1">
    <location>
        <begin position="1"/>
        <end position="440"/>
    </location>
</feature>
<feature type="chain" id="PRO_0000247899" description="Glutathione hydrolase 1 light chain" evidence="1">
    <location>
        <begin position="441"/>
        <end position="630"/>
    </location>
</feature>
<feature type="topological domain" description="Cytoplasmic" evidence="2">
    <location>
        <begin position="1"/>
        <end position="49"/>
    </location>
</feature>
<feature type="transmembrane region" description="Helical; Signal-anchor for type II membrane protein" evidence="2">
    <location>
        <begin position="50"/>
        <end position="70"/>
    </location>
</feature>
<feature type="topological domain" description="Lumenal" evidence="2">
    <location>
        <begin position="71"/>
        <end position="630"/>
    </location>
</feature>
<feature type="active site" description="Nucleophile" evidence="1">
    <location>
        <position position="441"/>
    </location>
</feature>
<feature type="binding site" evidence="1">
    <location>
        <position position="165"/>
    </location>
    <ligand>
        <name>L-glutamate</name>
        <dbReference type="ChEBI" id="CHEBI:29985"/>
    </ligand>
</feature>
<feature type="binding site" evidence="1">
    <location>
        <position position="459"/>
    </location>
    <ligand>
        <name>L-glutamate</name>
        <dbReference type="ChEBI" id="CHEBI:29985"/>
    </ligand>
</feature>
<feature type="binding site" evidence="1">
    <location>
        <position position="461"/>
    </location>
    <ligand>
        <name>L-glutamate</name>
        <dbReference type="ChEBI" id="CHEBI:29985"/>
    </ligand>
</feature>
<feature type="binding site" evidence="1">
    <location>
        <position position="483"/>
    </location>
    <ligand>
        <name>L-glutamate</name>
        <dbReference type="ChEBI" id="CHEBI:29985"/>
    </ligand>
</feature>
<feature type="binding site" evidence="1">
    <location>
        <begin position="511"/>
        <end position="512"/>
    </location>
    <ligand>
        <name>L-glutamate</name>
        <dbReference type="ChEBI" id="CHEBI:29985"/>
    </ligand>
</feature>
<feature type="binding site" evidence="1">
    <location>
        <begin position="532"/>
        <end position="533"/>
    </location>
    <ligand>
        <name>L-glutamate</name>
        <dbReference type="ChEBI" id="CHEBI:29985"/>
    </ligand>
</feature>
<feature type="glycosylation site" description="N-linked (GlcNAc...) asparagine" evidence="2">
    <location>
        <position position="156"/>
    </location>
</feature>
<feature type="glycosylation site" description="N-linked (GlcNAc...) asparagine" evidence="2">
    <location>
        <position position="180"/>
    </location>
</feature>
<feature type="glycosylation site" description="N-linked (GlcNAc...) asparagine" evidence="2">
    <location>
        <position position="315"/>
    </location>
</feature>
<feature type="glycosylation site" description="N-linked (GlcNAc...) asparagine" evidence="2">
    <location>
        <position position="397"/>
    </location>
</feature>
<feature type="glycosylation site" description="N-linked (GlcNAc...) asparagine" evidence="2">
    <location>
        <position position="417"/>
    </location>
</feature>
<feature type="glycosylation site" description="N-linked (GlcNAc...) asparagine" evidence="2">
    <location>
        <position position="612"/>
    </location>
</feature>
<accession>Q9US04</accession>
<protein>
    <recommendedName>
        <fullName>Glutathione hydrolase proenzyme 1</fullName>
        <ecNumber>3.4.19.13</ecNumber>
    </recommendedName>
    <alternativeName>
        <fullName>Gamma-glutamyltransferase 1</fullName>
    </alternativeName>
    <alternativeName>
        <fullName>Gamma-glutamyltranspeptidase 1</fullName>
        <ecNumber>2.3.2.2</ecNumber>
    </alternativeName>
    <component>
        <recommendedName>
            <fullName>Glutathione hydrolase 1 heavy chain</fullName>
        </recommendedName>
    </component>
    <component>
        <recommendedName>
            <fullName>Glutathione hydrolase 1 light chain</fullName>
        </recommendedName>
    </component>
</protein>
<proteinExistence type="evidence at transcript level"/>
<gene>
    <name type="primary">ggt1</name>
    <name type="ORF">SPAC664.09</name>
</gene>
<name>GGT1_SCHPO</name>
<comment type="function">
    <text evidence="3">Catalyzes the transfer of the gamma-glutamyl moiety of glutathione (GSH) and other gamma-glutamyl compounds to amino acids and peptides. Major GSH-degrading enzyme, catalyzing the hydrolytic release of L-glutamate from GSH.</text>
</comment>
<comment type="catalytic activity">
    <reaction>
        <text>an N-terminal (5-L-glutamyl)-[peptide] + an alpha-amino acid = 5-L-glutamyl amino acid + an N-terminal L-alpha-aminoacyl-[peptide]</text>
        <dbReference type="Rhea" id="RHEA:23904"/>
        <dbReference type="Rhea" id="RHEA-COMP:9780"/>
        <dbReference type="Rhea" id="RHEA-COMP:9795"/>
        <dbReference type="ChEBI" id="CHEBI:77644"/>
        <dbReference type="ChEBI" id="CHEBI:78597"/>
        <dbReference type="ChEBI" id="CHEBI:78599"/>
        <dbReference type="ChEBI" id="CHEBI:78608"/>
        <dbReference type="EC" id="2.3.2.2"/>
    </reaction>
</comment>
<comment type="catalytic activity">
    <reaction>
        <text>glutathione + H2O = L-cysteinylglycine + L-glutamate</text>
        <dbReference type="Rhea" id="RHEA:28807"/>
        <dbReference type="ChEBI" id="CHEBI:15377"/>
        <dbReference type="ChEBI" id="CHEBI:29985"/>
        <dbReference type="ChEBI" id="CHEBI:57925"/>
        <dbReference type="ChEBI" id="CHEBI:61694"/>
        <dbReference type="EC" id="3.4.19.13"/>
    </reaction>
</comment>
<comment type="catalytic activity">
    <reaction>
        <text>an S-substituted glutathione + H2O = an S-substituted L-cysteinylglycine + L-glutamate</text>
        <dbReference type="Rhea" id="RHEA:59468"/>
        <dbReference type="ChEBI" id="CHEBI:15377"/>
        <dbReference type="ChEBI" id="CHEBI:29985"/>
        <dbReference type="ChEBI" id="CHEBI:90779"/>
        <dbReference type="ChEBI" id="CHEBI:143103"/>
        <dbReference type="EC" id="3.4.19.13"/>
    </reaction>
</comment>
<comment type="pathway">
    <text>Sulfur metabolism; glutathione metabolism.</text>
</comment>
<comment type="subunit">
    <text evidence="1">Heterodimer composed of the light and heavy chains. The active site is located in the light chain (By similarity).</text>
</comment>
<comment type="subcellular location">
    <subcellularLocation>
        <location evidence="5">Endoplasmic reticulum membrane</location>
        <topology evidence="5">Single-pass type II membrane protein</topology>
    </subcellularLocation>
</comment>
<comment type="induction">
    <text evidence="4">Induced upon nitrogen starvation. Also induced by non-fermentable carbon sources such as glycerol, acetate and ethanol in a pap1-independent manner.</text>
</comment>
<comment type="PTM">
    <text evidence="1">Cleaved by autocatalysis into a large and a small subunit.</text>
</comment>
<comment type="similarity">
    <text evidence="5">Belongs to the gamma-glutamyltransferase family.</text>
</comment>
<evidence type="ECO:0000250" key="1"/>
<evidence type="ECO:0000255" key="2"/>
<evidence type="ECO:0000269" key="3">
    <source>
    </source>
</evidence>
<evidence type="ECO:0000269" key="4">
    <source>
    </source>
</evidence>
<evidence type="ECO:0000305" key="5"/>